<dbReference type="EC" id="3.2.2.9" evidence="1"/>
<dbReference type="EMBL" id="CP001175">
    <property type="protein sequence ID" value="ACK39424.1"/>
    <property type="molecule type" value="Genomic_DNA"/>
</dbReference>
<dbReference type="RefSeq" id="WP_012581294.1">
    <property type="nucleotide sequence ID" value="NC_011660.1"/>
</dbReference>
<dbReference type="SMR" id="B8DE17"/>
<dbReference type="KEGG" id="lmh:LMHCC_1076"/>
<dbReference type="HOGENOM" id="CLU_031248_2_2_9"/>
<dbReference type="UniPathway" id="UPA00904">
    <property type="reaction ID" value="UER00871"/>
</dbReference>
<dbReference type="GO" id="GO:0005829">
    <property type="term" value="C:cytosol"/>
    <property type="evidence" value="ECO:0007669"/>
    <property type="project" value="TreeGrafter"/>
</dbReference>
<dbReference type="GO" id="GO:0008782">
    <property type="term" value="F:adenosylhomocysteine nucleosidase activity"/>
    <property type="evidence" value="ECO:0007669"/>
    <property type="project" value="UniProtKB-UniRule"/>
</dbReference>
<dbReference type="GO" id="GO:0008930">
    <property type="term" value="F:methylthioadenosine nucleosidase activity"/>
    <property type="evidence" value="ECO:0007669"/>
    <property type="project" value="UniProtKB-UniRule"/>
</dbReference>
<dbReference type="GO" id="GO:0019509">
    <property type="term" value="P:L-methionine salvage from methylthioadenosine"/>
    <property type="evidence" value="ECO:0007669"/>
    <property type="project" value="UniProtKB-UniRule"/>
</dbReference>
<dbReference type="GO" id="GO:0019284">
    <property type="term" value="P:L-methionine salvage from S-adenosylmethionine"/>
    <property type="evidence" value="ECO:0007669"/>
    <property type="project" value="TreeGrafter"/>
</dbReference>
<dbReference type="GO" id="GO:0009164">
    <property type="term" value="P:nucleoside catabolic process"/>
    <property type="evidence" value="ECO:0007669"/>
    <property type="project" value="InterPro"/>
</dbReference>
<dbReference type="CDD" id="cd09008">
    <property type="entry name" value="MTAN"/>
    <property type="match status" value="1"/>
</dbReference>
<dbReference type="FunFam" id="3.40.50.1580:FF:000001">
    <property type="entry name" value="MTA/SAH nucleosidase family protein"/>
    <property type="match status" value="1"/>
</dbReference>
<dbReference type="Gene3D" id="3.40.50.1580">
    <property type="entry name" value="Nucleoside phosphorylase domain"/>
    <property type="match status" value="1"/>
</dbReference>
<dbReference type="HAMAP" id="MF_01684">
    <property type="entry name" value="Salvage_MtnN"/>
    <property type="match status" value="1"/>
</dbReference>
<dbReference type="InterPro" id="IPR010049">
    <property type="entry name" value="MTA_SAH_Nsdase"/>
</dbReference>
<dbReference type="InterPro" id="IPR000845">
    <property type="entry name" value="Nucleoside_phosphorylase_d"/>
</dbReference>
<dbReference type="InterPro" id="IPR035994">
    <property type="entry name" value="Nucleoside_phosphorylase_sf"/>
</dbReference>
<dbReference type="NCBIfam" id="TIGR01704">
    <property type="entry name" value="MTA_SAH-Nsdase"/>
    <property type="match status" value="1"/>
</dbReference>
<dbReference type="NCBIfam" id="NF004079">
    <property type="entry name" value="PRK05584.1"/>
    <property type="match status" value="1"/>
</dbReference>
<dbReference type="PANTHER" id="PTHR46832">
    <property type="entry name" value="5'-METHYLTHIOADENOSINE/S-ADENOSYLHOMOCYSTEINE NUCLEOSIDASE"/>
    <property type="match status" value="1"/>
</dbReference>
<dbReference type="PANTHER" id="PTHR46832:SF1">
    <property type="entry name" value="5'-METHYLTHIOADENOSINE_S-ADENOSYLHOMOCYSTEINE NUCLEOSIDASE"/>
    <property type="match status" value="1"/>
</dbReference>
<dbReference type="Pfam" id="PF01048">
    <property type="entry name" value="PNP_UDP_1"/>
    <property type="match status" value="1"/>
</dbReference>
<dbReference type="SUPFAM" id="SSF53167">
    <property type="entry name" value="Purine and uridine phosphorylases"/>
    <property type="match status" value="1"/>
</dbReference>
<evidence type="ECO:0000255" key="1">
    <source>
        <dbReference type="HAMAP-Rule" id="MF_01684"/>
    </source>
</evidence>
<name>MTNN_LISMH</name>
<reference key="1">
    <citation type="journal article" date="2011" name="J. Bacteriol.">
        <title>Genome sequence of lineage III Listeria monocytogenes strain HCC23.</title>
        <authorList>
            <person name="Steele C.L."/>
            <person name="Donaldson J.R."/>
            <person name="Paul D."/>
            <person name="Banes M.M."/>
            <person name="Arick T."/>
            <person name="Bridges S.M."/>
            <person name="Lawrence M.L."/>
        </authorList>
    </citation>
    <scope>NUCLEOTIDE SEQUENCE [LARGE SCALE GENOMIC DNA]</scope>
    <source>
        <strain>HCC23</strain>
    </source>
</reference>
<comment type="function">
    <text evidence="1">Catalyzes the irreversible cleavage of the glycosidic bond in both 5'-methylthioadenosine (MTA) and S-adenosylhomocysteine (SAH/AdoHcy) to adenine and the corresponding thioribose, 5'-methylthioribose and S-ribosylhomocysteine, respectively. Also cleaves 5'-deoxyadenosine, a toxic by-product of radical S-adenosylmethionine (SAM) enzymes, into 5-deoxyribose and adenine.</text>
</comment>
<comment type="catalytic activity">
    <reaction evidence="1">
        <text>S-adenosyl-L-homocysteine + H2O = S-(5-deoxy-D-ribos-5-yl)-L-homocysteine + adenine</text>
        <dbReference type="Rhea" id="RHEA:17805"/>
        <dbReference type="ChEBI" id="CHEBI:15377"/>
        <dbReference type="ChEBI" id="CHEBI:16708"/>
        <dbReference type="ChEBI" id="CHEBI:57856"/>
        <dbReference type="ChEBI" id="CHEBI:58195"/>
        <dbReference type="EC" id="3.2.2.9"/>
    </reaction>
</comment>
<comment type="catalytic activity">
    <reaction evidence="1">
        <text>S-methyl-5'-thioadenosine + H2O = 5-(methylsulfanyl)-D-ribose + adenine</text>
        <dbReference type="Rhea" id="RHEA:13617"/>
        <dbReference type="ChEBI" id="CHEBI:15377"/>
        <dbReference type="ChEBI" id="CHEBI:16708"/>
        <dbReference type="ChEBI" id="CHEBI:17509"/>
        <dbReference type="ChEBI" id="CHEBI:78440"/>
        <dbReference type="EC" id="3.2.2.9"/>
    </reaction>
</comment>
<comment type="catalytic activity">
    <reaction evidence="1">
        <text>5'-deoxyadenosine + H2O = 5-deoxy-D-ribose + adenine</text>
        <dbReference type="Rhea" id="RHEA:29859"/>
        <dbReference type="ChEBI" id="CHEBI:15377"/>
        <dbReference type="ChEBI" id="CHEBI:16708"/>
        <dbReference type="ChEBI" id="CHEBI:17319"/>
        <dbReference type="ChEBI" id="CHEBI:149540"/>
        <dbReference type="EC" id="3.2.2.9"/>
    </reaction>
    <physiologicalReaction direction="left-to-right" evidence="1">
        <dbReference type="Rhea" id="RHEA:29860"/>
    </physiologicalReaction>
</comment>
<comment type="pathway">
    <text evidence="1">Amino-acid biosynthesis; L-methionine biosynthesis via salvage pathway; S-methyl-5-thio-alpha-D-ribose 1-phosphate from S-methyl-5'-thioadenosine (hydrolase route): step 1/2.</text>
</comment>
<comment type="similarity">
    <text evidence="1">Belongs to the PNP/UDP phosphorylase family. MtnN subfamily.</text>
</comment>
<proteinExistence type="inferred from homology"/>
<organism>
    <name type="scientific">Listeria monocytogenes serotype 4a (strain HCC23)</name>
    <dbReference type="NCBI Taxonomy" id="552536"/>
    <lineage>
        <taxon>Bacteria</taxon>
        <taxon>Bacillati</taxon>
        <taxon>Bacillota</taxon>
        <taxon>Bacilli</taxon>
        <taxon>Bacillales</taxon>
        <taxon>Listeriaceae</taxon>
        <taxon>Listeria</taxon>
    </lineage>
</organism>
<sequence>MTIGIIGAMEEEVELLKNSMPSVEEIVIGGAKFYVGEVAGKEVVLLESGIGKVNAALGTTLMADRFKPEVIINTGSAGGMAEGLAVGDVIISDRLAYGDVDVTEFGYTYGQVPRMPAFYQGDAVLLKKAETIYREYFAASENKAVYGLVVTNDSFIMRPDQHETIRTFFPDVKAVEMEAAAIAQVAYQFDIPFLIIRAISDLANQEATISFDEFIHLAAKQSATCIIELLKTI</sequence>
<gene>
    <name evidence="1" type="primary">mtnN</name>
    <name type="ordered locus">LMHCC_1076</name>
</gene>
<feature type="chain" id="PRO_1000187428" description="5'-methylthioadenosine/S-adenosylhomocysteine nucleosidase">
    <location>
        <begin position="1"/>
        <end position="233"/>
    </location>
</feature>
<feature type="active site" description="Proton acceptor" evidence="1">
    <location>
        <position position="12"/>
    </location>
</feature>
<feature type="active site" description="Proton donor" evidence="1">
    <location>
        <position position="201"/>
    </location>
</feature>
<feature type="binding site" evidence="1">
    <location>
        <position position="78"/>
    </location>
    <ligand>
        <name>substrate</name>
    </ligand>
</feature>
<feature type="binding site" evidence="1">
    <location>
        <position position="156"/>
    </location>
    <ligand>
        <name>substrate</name>
    </ligand>
</feature>
<feature type="binding site" evidence="1">
    <location>
        <begin position="177"/>
        <end position="178"/>
    </location>
    <ligand>
        <name>substrate</name>
    </ligand>
</feature>
<keyword id="KW-0028">Amino-acid biosynthesis</keyword>
<keyword id="KW-0378">Hydrolase</keyword>
<keyword id="KW-0486">Methionine biosynthesis</keyword>
<protein>
    <recommendedName>
        <fullName evidence="1">5'-methylthioadenosine/S-adenosylhomocysteine nucleosidase</fullName>
        <shortName evidence="1">MTA/SAH nucleosidase</shortName>
        <shortName evidence="1">MTAN</shortName>
        <ecNumber evidence="1">3.2.2.9</ecNumber>
    </recommendedName>
    <alternativeName>
        <fullName evidence="1">5'-deoxyadenosine nucleosidase</fullName>
        <shortName evidence="1">DOA nucleosidase</shortName>
        <shortName evidence="1">dAdo nucleosidase</shortName>
    </alternativeName>
    <alternativeName>
        <fullName evidence="1">5'-methylthioadenosine nucleosidase</fullName>
        <shortName evidence="1">MTA nucleosidase</shortName>
    </alternativeName>
    <alternativeName>
        <fullName evidence="1">S-adenosylhomocysteine nucleosidase</fullName>
        <shortName evidence="1">AdoHcy nucleosidase</shortName>
        <shortName evidence="1">SAH nucleosidase</shortName>
        <shortName evidence="1">SRH nucleosidase</shortName>
    </alternativeName>
</protein>
<accession>B8DE17</accession>